<organism>
    <name type="scientific">Methylococcus capsulatus (strain ATCC 33009 / NCIMB 11132 / Bath)</name>
    <dbReference type="NCBI Taxonomy" id="243233"/>
    <lineage>
        <taxon>Bacteria</taxon>
        <taxon>Pseudomonadati</taxon>
        <taxon>Pseudomonadota</taxon>
        <taxon>Gammaproteobacteria</taxon>
        <taxon>Methylococcales</taxon>
        <taxon>Methylococcaceae</taxon>
        <taxon>Methylococcus</taxon>
    </lineage>
</organism>
<name>GLMM_METCA</name>
<dbReference type="EC" id="5.4.2.10" evidence="1"/>
<dbReference type="EMBL" id="AE017282">
    <property type="protein sequence ID" value="AAU91923.1"/>
    <property type="molecule type" value="Genomic_DNA"/>
</dbReference>
<dbReference type="RefSeq" id="WP_010961099.1">
    <property type="nucleotide sequence ID" value="NC_002977.6"/>
</dbReference>
<dbReference type="SMR" id="Q607B4"/>
<dbReference type="STRING" id="243233.MCA1847"/>
<dbReference type="GeneID" id="88224092"/>
<dbReference type="KEGG" id="mca:MCA1847"/>
<dbReference type="eggNOG" id="COG1109">
    <property type="taxonomic scope" value="Bacteria"/>
</dbReference>
<dbReference type="HOGENOM" id="CLU_016950_7_0_6"/>
<dbReference type="Proteomes" id="UP000006821">
    <property type="component" value="Chromosome"/>
</dbReference>
<dbReference type="GO" id="GO:0005829">
    <property type="term" value="C:cytosol"/>
    <property type="evidence" value="ECO:0007669"/>
    <property type="project" value="TreeGrafter"/>
</dbReference>
<dbReference type="GO" id="GO:0000287">
    <property type="term" value="F:magnesium ion binding"/>
    <property type="evidence" value="ECO:0007669"/>
    <property type="project" value="UniProtKB-UniRule"/>
</dbReference>
<dbReference type="GO" id="GO:0008966">
    <property type="term" value="F:phosphoglucosamine mutase activity"/>
    <property type="evidence" value="ECO:0007669"/>
    <property type="project" value="UniProtKB-UniRule"/>
</dbReference>
<dbReference type="GO" id="GO:0004615">
    <property type="term" value="F:phosphomannomutase activity"/>
    <property type="evidence" value="ECO:0007669"/>
    <property type="project" value="TreeGrafter"/>
</dbReference>
<dbReference type="GO" id="GO:0005975">
    <property type="term" value="P:carbohydrate metabolic process"/>
    <property type="evidence" value="ECO:0007669"/>
    <property type="project" value="InterPro"/>
</dbReference>
<dbReference type="GO" id="GO:0009252">
    <property type="term" value="P:peptidoglycan biosynthetic process"/>
    <property type="evidence" value="ECO:0007669"/>
    <property type="project" value="TreeGrafter"/>
</dbReference>
<dbReference type="GO" id="GO:0006048">
    <property type="term" value="P:UDP-N-acetylglucosamine biosynthetic process"/>
    <property type="evidence" value="ECO:0007669"/>
    <property type="project" value="TreeGrafter"/>
</dbReference>
<dbReference type="CDD" id="cd05802">
    <property type="entry name" value="GlmM"/>
    <property type="match status" value="1"/>
</dbReference>
<dbReference type="FunFam" id="3.30.310.50:FF:000001">
    <property type="entry name" value="Phosphoglucosamine mutase"/>
    <property type="match status" value="1"/>
</dbReference>
<dbReference type="FunFam" id="3.40.120.10:FF:000001">
    <property type="entry name" value="Phosphoglucosamine mutase"/>
    <property type="match status" value="1"/>
</dbReference>
<dbReference type="FunFam" id="3.40.120.10:FF:000002">
    <property type="entry name" value="Phosphoglucosamine mutase"/>
    <property type="match status" value="1"/>
</dbReference>
<dbReference type="Gene3D" id="3.40.120.10">
    <property type="entry name" value="Alpha-D-Glucose-1,6-Bisphosphate, subunit A, domain 3"/>
    <property type="match status" value="3"/>
</dbReference>
<dbReference type="Gene3D" id="3.30.310.50">
    <property type="entry name" value="Alpha-D-phosphohexomutase, C-terminal domain"/>
    <property type="match status" value="1"/>
</dbReference>
<dbReference type="HAMAP" id="MF_01554_B">
    <property type="entry name" value="GlmM_B"/>
    <property type="match status" value="1"/>
</dbReference>
<dbReference type="InterPro" id="IPR005844">
    <property type="entry name" value="A-D-PHexomutase_a/b/a-I"/>
</dbReference>
<dbReference type="InterPro" id="IPR016055">
    <property type="entry name" value="A-D-PHexomutase_a/b/a-I/II/III"/>
</dbReference>
<dbReference type="InterPro" id="IPR005845">
    <property type="entry name" value="A-D-PHexomutase_a/b/a-II"/>
</dbReference>
<dbReference type="InterPro" id="IPR005846">
    <property type="entry name" value="A-D-PHexomutase_a/b/a-III"/>
</dbReference>
<dbReference type="InterPro" id="IPR005843">
    <property type="entry name" value="A-D-PHexomutase_C"/>
</dbReference>
<dbReference type="InterPro" id="IPR036900">
    <property type="entry name" value="A-D-PHexomutase_C_sf"/>
</dbReference>
<dbReference type="InterPro" id="IPR016066">
    <property type="entry name" value="A-D-PHexomutase_CS"/>
</dbReference>
<dbReference type="InterPro" id="IPR005841">
    <property type="entry name" value="Alpha-D-phosphohexomutase_SF"/>
</dbReference>
<dbReference type="InterPro" id="IPR006352">
    <property type="entry name" value="GlmM_bact"/>
</dbReference>
<dbReference type="InterPro" id="IPR050060">
    <property type="entry name" value="Phosphoglucosamine_mutase"/>
</dbReference>
<dbReference type="NCBIfam" id="TIGR01455">
    <property type="entry name" value="glmM"/>
    <property type="match status" value="1"/>
</dbReference>
<dbReference type="NCBIfam" id="NF008139">
    <property type="entry name" value="PRK10887.1"/>
    <property type="match status" value="1"/>
</dbReference>
<dbReference type="PANTHER" id="PTHR42946:SF1">
    <property type="entry name" value="PHOSPHOGLUCOMUTASE (ALPHA-D-GLUCOSE-1,6-BISPHOSPHATE-DEPENDENT)"/>
    <property type="match status" value="1"/>
</dbReference>
<dbReference type="PANTHER" id="PTHR42946">
    <property type="entry name" value="PHOSPHOHEXOSE MUTASE"/>
    <property type="match status" value="1"/>
</dbReference>
<dbReference type="Pfam" id="PF02878">
    <property type="entry name" value="PGM_PMM_I"/>
    <property type="match status" value="1"/>
</dbReference>
<dbReference type="Pfam" id="PF02879">
    <property type="entry name" value="PGM_PMM_II"/>
    <property type="match status" value="1"/>
</dbReference>
<dbReference type="Pfam" id="PF02880">
    <property type="entry name" value="PGM_PMM_III"/>
    <property type="match status" value="1"/>
</dbReference>
<dbReference type="Pfam" id="PF00408">
    <property type="entry name" value="PGM_PMM_IV"/>
    <property type="match status" value="1"/>
</dbReference>
<dbReference type="PRINTS" id="PR00509">
    <property type="entry name" value="PGMPMM"/>
</dbReference>
<dbReference type="SUPFAM" id="SSF55957">
    <property type="entry name" value="Phosphoglucomutase, C-terminal domain"/>
    <property type="match status" value="1"/>
</dbReference>
<dbReference type="SUPFAM" id="SSF53738">
    <property type="entry name" value="Phosphoglucomutase, first 3 domains"/>
    <property type="match status" value="3"/>
</dbReference>
<dbReference type="PROSITE" id="PS00710">
    <property type="entry name" value="PGM_PMM"/>
    <property type="match status" value="1"/>
</dbReference>
<comment type="function">
    <text evidence="1">Catalyzes the conversion of glucosamine-6-phosphate to glucosamine-1-phosphate.</text>
</comment>
<comment type="catalytic activity">
    <reaction evidence="1">
        <text>alpha-D-glucosamine 1-phosphate = D-glucosamine 6-phosphate</text>
        <dbReference type="Rhea" id="RHEA:23424"/>
        <dbReference type="ChEBI" id="CHEBI:58516"/>
        <dbReference type="ChEBI" id="CHEBI:58725"/>
        <dbReference type="EC" id="5.4.2.10"/>
    </reaction>
</comment>
<comment type="cofactor">
    <cofactor evidence="1">
        <name>Mg(2+)</name>
        <dbReference type="ChEBI" id="CHEBI:18420"/>
    </cofactor>
    <text evidence="1">Binds 1 Mg(2+) ion per subunit.</text>
</comment>
<comment type="PTM">
    <text evidence="1">Activated by phosphorylation.</text>
</comment>
<comment type="similarity">
    <text evidence="1">Belongs to the phosphohexose mutase family.</text>
</comment>
<keyword id="KW-0413">Isomerase</keyword>
<keyword id="KW-0460">Magnesium</keyword>
<keyword id="KW-0479">Metal-binding</keyword>
<keyword id="KW-0597">Phosphoprotein</keyword>
<keyword id="KW-1185">Reference proteome</keyword>
<protein>
    <recommendedName>
        <fullName evidence="1">Phosphoglucosamine mutase</fullName>
        <ecNumber evidence="1">5.4.2.10</ecNumber>
    </recommendedName>
</protein>
<feature type="chain" id="PRO_0000147914" description="Phosphoglucosamine mutase">
    <location>
        <begin position="1"/>
        <end position="447"/>
    </location>
</feature>
<feature type="active site" description="Phosphoserine intermediate" evidence="1">
    <location>
        <position position="102"/>
    </location>
</feature>
<feature type="binding site" description="via phosphate group" evidence="1">
    <location>
        <position position="102"/>
    </location>
    <ligand>
        <name>Mg(2+)</name>
        <dbReference type="ChEBI" id="CHEBI:18420"/>
    </ligand>
</feature>
<feature type="binding site" evidence="1">
    <location>
        <position position="241"/>
    </location>
    <ligand>
        <name>Mg(2+)</name>
        <dbReference type="ChEBI" id="CHEBI:18420"/>
    </ligand>
</feature>
<feature type="binding site" evidence="1">
    <location>
        <position position="243"/>
    </location>
    <ligand>
        <name>Mg(2+)</name>
        <dbReference type="ChEBI" id="CHEBI:18420"/>
    </ligand>
</feature>
<feature type="binding site" evidence="1">
    <location>
        <position position="245"/>
    </location>
    <ligand>
        <name>Mg(2+)</name>
        <dbReference type="ChEBI" id="CHEBI:18420"/>
    </ligand>
</feature>
<feature type="modified residue" description="Phosphoserine" evidence="1">
    <location>
        <position position="102"/>
    </location>
</feature>
<sequence length="447" mass="48325">MKKEYFGTDGIRGRVGDYPITPDFMLKLGWAAGCVFAREMPGRRVLIGKDTRISGYMFESALEAGFSAAGVDTQLLGPMPTPAVAYLTRTLRAQAGVVISASHNPYYDNGIKFFGPDGMKLPDELELLIEDYLGRPMTTVECSHIGKATRIVDAAGRYIEFCKSTIPLGMHFSGMKIVVDCAHGSTYHVAPDVFSELRATVSTLGVAPDGLNINDRVGATDPENLRQTVLEENADLGIALDGDGDRLIMVDHRGEVVDGDELLFVIANARHAEGELKGSVVGTLMSNLGLEQAIRRLGLEFRRAAVGDRYVMEMMLEHGSMLGGEGSGHIICRDRTTTGDGIVSALQVLAEIVRSGKTLHELKQGMRKYPQRLVNVRLAERVSLASVPLVQKVKAEVEAELGDSGRVLLRPSGTEPLIRVMVEGADEGQVRELADRLAGAVARAFSA</sequence>
<gene>
    <name evidence="1" type="primary">glmM</name>
    <name type="ordered locus">MCA1847</name>
</gene>
<reference key="1">
    <citation type="journal article" date="2004" name="PLoS Biol.">
        <title>Genomic insights into methanotrophy: the complete genome sequence of Methylococcus capsulatus (Bath).</title>
        <authorList>
            <person name="Ward N.L."/>
            <person name="Larsen O."/>
            <person name="Sakwa J."/>
            <person name="Bruseth L."/>
            <person name="Khouri H.M."/>
            <person name="Durkin A.S."/>
            <person name="Dimitrov G."/>
            <person name="Jiang L."/>
            <person name="Scanlan D."/>
            <person name="Kang K.H."/>
            <person name="Lewis M.R."/>
            <person name="Nelson K.E."/>
            <person name="Methe B.A."/>
            <person name="Wu M."/>
            <person name="Heidelberg J.F."/>
            <person name="Paulsen I.T."/>
            <person name="Fouts D.E."/>
            <person name="Ravel J."/>
            <person name="Tettelin H."/>
            <person name="Ren Q."/>
            <person name="Read T.D."/>
            <person name="DeBoy R.T."/>
            <person name="Seshadri R."/>
            <person name="Salzberg S.L."/>
            <person name="Jensen H.B."/>
            <person name="Birkeland N.K."/>
            <person name="Nelson W.C."/>
            <person name="Dodson R.J."/>
            <person name="Grindhaug S.H."/>
            <person name="Holt I.E."/>
            <person name="Eidhammer I."/>
            <person name="Jonasen I."/>
            <person name="Vanaken S."/>
            <person name="Utterback T.R."/>
            <person name="Feldblyum T.V."/>
            <person name="Fraser C.M."/>
            <person name="Lillehaug J.R."/>
            <person name="Eisen J.A."/>
        </authorList>
    </citation>
    <scope>NUCLEOTIDE SEQUENCE [LARGE SCALE GENOMIC DNA]</scope>
    <source>
        <strain>ATCC 33009 / NCIMB 11132 / Bath</strain>
    </source>
</reference>
<proteinExistence type="inferred from homology"/>
<accession>Q607B4</accession>
<evidence type="ECO:0000255" key="1">
    <source>
        <dbReference type="HAMAP-Rule" id="MF_01554"/>
    </source>
</evidence>